<gene>
    <name evidence="1" type="primary">zupT</name>
    <name type="ordered locus">SEN3033</name>
</gene>
<comment type="function">
    <text evidence="1">Mediates zinc uptake. May also transport other divalent cations.</text>
</comment>
<comment type="catalytic activity">
    <reaction evidence="1">
        <text>Zn(2+)(in) = Zn(2+)(out)</text>
        <dbReference type="Rhea" id="RHEA:29351"/>
        <dbReference type="ChEBI" id="CHEBI:29105"/>
    </reaction>
</comment>
<comment type="subcellular location">
    <subcellularLocation>
        <location evidence="1">Cell inner membrane</location>
        <topology evidence="1">Multi-pass membrane protein</topology>
    </subcellularLocation>
</comment>
<comment type="similarity">
    <text evidence="1">Belongs to the ZIP transporter (TC 2.A.5) family. ZupT subfamily.</text>
</comment>
<protein>
    <recommendedName>
        <fullName evidence="1">Zinc transporter ZupT</fullName>
    </recommendedName>
</protein>
<sequence>MSVPLILTLLAGAATFIGAFLGVLGQKPSNRVLAFSLGFAAGIMLLISLMEMLPAALDTEGMSPVLGYGMFIIGLLGYFGLDRLLPHAHPQDLVQKRQQPLPGSIKRTAILLTLGISLHNFPEGIATFVTASSNLELGFGIALAVALHNIPEGLAVAGPVYAATGSKRTAIFWAGISGMAEILGGVLAWLILGSLVSPIVMAAIMAAVAGIMVALSVDELMPLAKEIDPNNNPSYGVLCGMSIMGLSLVILQTIGIG</sequence>
<dbReference type="EMBL" id="AM933172">
    <property type="protein sequence ID" value="CAR34609.1"/>
    <property type="molecule type" value="Genomic_DNA"/>
</dbReference>
<dbReference type="RefSeq" id="WP_000115874.1">
    <property type="nucleotide sequence ID" value="NC_011294.1"/>
</dbReference>
<dbReference type="SMR" id="B5QZ27"/>
<dbReference type="KEGG" id="set:SEN3033"/>
<dbReference type="HOGENOM" id="CLU_015114_1_3_6"/>
<dbReference type="Proteomes" id="UP000000613">
    <property type="component" value="Chromosome"/>
</dbReference>
<dbReference type="GO" id="GO:0005886">
    <property type="term" value="C:plasma membrane"/>
    <property type="evidence" value="ECO:0007669"/>
    <property type="project" value="UniProtKB-SubCell"/>
</dbReference>
<dbReference type="GO" id="GO:0046872">
    <property type="term" value="F:metal ion binding"/>
    <property type="evidence" value="ECO:0007669"/>
    <property type="project" value="UniProtKB-KW"/>
</dbReference>
<dbReference type="GO" id="GO:0005385">
    <property type="term" value="F:zinc ion transmembrane transporter activity"/>
    <property type="evidence" value="ECO:0007669"/>
    <property type="project" value="UniProtKB-UniRule"/>
</dbReference>
<dbReference type="HAMAP" id="MF_00548">
    <property type="entry name" value="ZupT"/>
    <property type="match status" value="1"/>
</dbReference>
<dbReference type="InterPro" id="IPR003689">
    <property type="entry name" value="ZIP"/>
</dbReference>
<dbReference type="InterPro" id="IPR023498">
    <property type="entry name" value="Zn_transptr_ZupT"/>
</dbReference>
<dbReference type="NCBIfam" id="NF003243">
    <property type="entry name" value="PRK04201.1"/>
    <property type="match status" value="1"/>
</dbReference>
<dbReference type="PANTHER" id="PTHR11040:SF205">
    <property type="entry name" value="ZINC TRANSPORTER ZUPT"/>
    <property type="match status" value="1"/>
</dbReference>
<dbReference type="PANTHER" id="PTHR11040">
    <property type="entry name" value="ZINC/IRON TRANSPORTER"/>
    <property type="match status" value="1"/>
</dbReference>
<dbReference type="Pfam" id="PF02535">
    <property type="entry name" value="Zip"/>
    <property type="match status" value="2"/>
</dbReference>
<reference key="1">
    <citation type="journal article" date="2008" name="Genome Res.">
        <title>Comparative genome analysis of Salmonella enteritidis PT4 and Salmonella gallinarum 287/91 provides insights into evolutionary and host adaptation pathways.</title>
        <authorList>
            <person name="Thomson N.R."/>
            <person name="Clayton D.J."/>
            <person name="Windhorst D."/>
            <person name="Vernikos G."/>
            <person name="Davidson S."/>
            <person name="Churcher C."/>
            <person name="Quail M.A."/>
            <person name="Stevens M."/>
            <person name="Jones M.A."/>
            <person name="Watson M."/>
            <person name="Barron A."/>
            <person name="Layton A."/>
            <person name="Pickard D."/>
            <person name="Kingsley R.A."/>
            <person name="Bignell A."/>
            <person name="Clark L."/>
            <person name="Harris B."/>
            <person name="Ormond D."/>
            <person name="Abdellah Z."/>
            <person name="Brooks K."/>
            <person name="Cherevach I."/>
            <person name="Chillingworth T."/>
            <person name="Woodward J."/>
            <person name="Norberczak H."/>
            <person name="Lord A."/>
            <person name="Arrowsmith C."/>
            <person name="Jagels K."/>
            <person name="Moule S."/>
            <person name="Mungall K."/>
            <person name="Saunders M."/>
            <person name="Whitehead S."/>
            <person name="Chabalgoity J.A."/>
            <person name="Maskell D."/>
            <person name="Humphreys T."/>
            <person name="Roberts M."/>
            <person name="Barrow P.A."/>
            <person name="Dougan G."/>
            <person name="Parkhill J."/>
        </authorList>
    </citation>
    <scope>NUCLEOTIDE SEQUENCE [LARGE SCALE GENOMIC DNA]</scope>
    <source>
        <strain>P125109</strain>
    </source>
</reference>
<keyword id="KW-0997">Cell inner membrane</keyword>
<keyword id="KW-1003">Cell membrane</keyword>
<keyword id="KW-0406">Ion transport</keyword>
<keyword id="KW-0408">Iron</keyword>
<keyword id="KW-0472">Membrane</keyword>
<keyword id="KW-0479">Metal-binding</keyword>
<keyword id="KW-0812">Transmembrane</keyword>
<keyword id="KW-1133">Transmembrane helix</keyword>
<keyword id="KW-0813">Transport</keyword>
<keyword id="KW-0862">Zinc</keyword>
<keyword id="KW-0864">Zinc transport</keyword>
<accession>B5QZ27</accession>
<proteinExistence type="inferred from homology"/>
<name>ZUPT_SALEP</name>
<feature type="chain" id="PRO_1000128962" description="Zinc transporter ZupT">
    <location>
        <begin position="1"/>
        <end position="257"/>
    </location>
</feature>
<feature type="transmembrane region" description="Helical" evidence="1">
    <location>
        <begin position="5"/>
        <end position="25"/>
    </location>
</feature>
<feature type="transmembrane region" description="Helical" evidence="1">
    <location>
        <begin position="32"/>
        <end position="52"/>
    </location>
</feature>
<feature type="transmembrane region" description="Helical" evidence="1">
    <location>
        <begin position="61"/>
        <end position="81"/>
    </location>
</feature>
<feature type="transmembrane region" description="Helical" evidence="1">
    <location>
        <begin position="109"/>
        <end position="129"/>
    </location>
</feature>
<feature type="transmembrane region" description="Helical" evidence="1">
    <location>
        <begin position="137"/>
        <end position="157"/>
    </location>
</feature>
<feature type="transmembrane region" description="Helical" evidence="1">
    <location>
        <begin position="171"/>
        <end position="191"/>
    </location>
</feature>
<feature type="transmembrane region" description="Helical" evidence="1">
    <location>
        <begin position="195"/>
        <end position="215"/>
    </location>
</feature>
<feature type="transmembrane region" description="Helical" evidence="1">
    <location>
        <begin position="236"/>
        <end position="256"/>
    </location>
</feature>
<feature type="binding site" description="M2 metal binding site" evidence="1">
    <location>
        <position position="120"/>
    </location>
    <ligand>
        <name>Fe(2+)</name>
        <dbReference type="ChEBI" id="CHEBI:29033"/>
    </ligand>
</feature>
<feature type="binding site" description="M2 metal binding site" evidence="1">
    <location>
        <position position="123"/>
    </location>
    <ligand>
        <name>Fe(2+)</name>
        <dbReference type="ChEBI" id="CHEBI:29033"/>
    </ligand>
</feature>
<feature type="binding site" description="M1 metal binding site" evidence="1">
    <location>
        <position position="123"/>
    </location>
    <ligand>
        <name>Zn(2+)</name>
        <dbReference type="ChEBI" id="CHEBI:29105"/>
    </ligand>
</feature>
<feature type="binding site" description="M1 metal binding site" evidence="1">
    <location>
        <position position="148"/>
    </location>
    <ligand>
        <name>Zn(2+)</name>
        <dbReference type="ChEBI" id="CHEBI:29105"/>
    </ligand>
</feature>
<feature type="binding site" description="M2 metal binding site" evidence="1">
    <location>
        <position position="149"/>
    </location>
    <ligand>
        <name>Fe(2+)</name>
        <dbReference type="ChEBI" id="CHEBI:29033"/>
    </ligand>
</feature>
<feature type="binding site" description="M2 metal binding site" evidence="1">
    <location>
        <position position="152"/>
    </location>
    <ligand>
        <name>Fe(2+)</name>
        <dbReference type="ChEBI" id="CHEBI:29033"/>
    </ligand>
</feature>
<feature type="binding site" description="M1 metal binding site" evidence="1">
    <location>
        <position position="152"/>
    </location>
    <ligand>
        <name>Zn(2+)</name>
        <dbReference type="ChEBI" id="CHEBI:29105"/>
    </ligand>
</feature>
<feature type="binding site" description="M2 metal binding site" evidence="1">
    <location>
        <position position="181"/>
    </location>
    <ligand>
        <name>Fe(2+)</name>
        <dbReference type="ChEBI" id="CHEBI:29033"/>
    </ligand>
</feature>
<organism>
    <name type="scientific">Salmonella enteritidis PT4 (strain P125109)</name>
    <dbReference type="NCBI Taxonomy" id="550537"/>
    <lineage>
        <taxon>Bacteria</taxon>
        <taxon>Pseudomonadati</taxon>
        <taxon>Pseudomonadota</taxon>
        <taxon>Gammaproteobacteria</taxon>
        <taxon>Enterobacterales</taxon>
        <taxon>Enterobacteriaceae</taxon>
        <taxon>Salmonella</taxon>
    </lineage>
</organism>
<evidence type="ECO:0000255" key="1">
    <source>
        <dbReference type="HAMAP-Rule" id="MF_00548"/>
    </source>
</evidence>